<protein>
    <recommendedName>
        <fullName evidence="1">Pyrimidine/purine nucleoside phosphorylase</fullName>
        <ecNumber evidence="1">2.4.2.1</ecNumber>
        <ecNumber evidence="1">2.4.2.2</ecNumber>
    </recommendedName>
    <alternativeName>
        <fullName evidence="1">Adenosine phosphorylase</fullName>
    </alternativeName>
    <alternativeName>
        <fullName evidence="1">Cytidine phosphorylase</fullName>
    </alternativeName>
    <alternativeName>
        <fullName evidence="1">Guanosine phosphorylase</fullName>
    </alternativeName>
    <alternativeName>
        <fullName evidence="1">Inosine phosphorylase</fullName>
    </alternativeName>
    <alternativeName>
        <fullName evidence="1">Thymidine phosphorylase</fullName>
    </alternativeName>
    <alternativeName>
        <fullName evidence="1">Uridine phosphorylase</fullName>
    </alternativeName>
    <alternativeName>
        <fullName evidence="1">Xanthosine phosphorylase</fullName>
    </alternativeName>
</protein>
<sequence length="94" mass="10234">MLQSNEYFSGKVKSIGFSSSSTGRASVGVMVEGEYTFSTAEPEEMTVISGALNVLLPDATDWQVYEAGSVFNVPGHSEFHLQVAEPTSYLCRYL</sequence>
<organism>
    <name type="scientific">Shigella flexneri serotype 5b (strain 8401)</name>
    <dbReference type="NCBI Taxonomy" id="373384"/>
    <lineage>
        <taxon>Bacteria</taxon>
        <taxon>Pseudomonadati</taxon>
        <taxon>Pseudomonadota</taxon>
        <taxon>Gammaproteobacteria</taxon>
        <taxon>Enterobacterales</taxon>
        <taxon>Enterobacteriaceae</taxon>
        <taxon>Shigella</taxon>
    </lineage>
</organism>
<reference key="1">
    <citation type="journal article" date="2006" name="BMC Genomics">
        <title>Complete genome sequence of Shigella flexneri 5b and comparison with Shigella flexneri 2a.</title>
        <authorList>
            <person name="Nie H."/>
            <person name="Yang F."/>
            <person name="Zhang X."/>
            <person name="Yang J."/>
            <person name="Chen L."/>
            <person name="Wang J."/>
            <person name="Xiong Z."/>
            <person name="Peng J."/>
            <person name="Sun L."/>
            <person name="Dong J."/>
            <person name="Xue Y."/>
            <person name="Xu X."/>
            <person name="Chen S."/>
            <person name="Yao Z."/>
            <person name="Shen Y."/>
            <person name="Jin Q."/>
        </authorList>
    </citation>
    <scope>NUCLEOTIDE SEQUENCE [LARGE SCALE GENOMIC DNA]</scope>
    <source>
        <strain>8401</strain>
    </source>
</reference>
<proteinExistence type="inferred from homology"/>
<comment type="function">
    <text evidence="1">Catalyzes the phosphorolysis of diverse nucleosides, yielding D-ribose 1-phosphate and the respective free bases. Can use uridine, adenosine, guanosine, cytidine, thymidine, inosine and xanthosine as substrates. Also catalyzes the reverse reactions.</text>
</comment>
<comment type="catalytic activity">
    <reaction evidence="1">
        <text>a purine D-ribonucleoside + phosphate = a purine nucleobase + alpha-D-ribose 1-phosphate</text>
        <dbReference type="Rhea" id="RHEA:19805"/>
        <dbReference type="ChEBI" id="CHEBI:26386"/>
        <dbReference type="ChEBI" id="CHEBI:43474"/>
        <dbReference type="ChEBI" id="CHEBI:57720"/>
        <dbReference type="ChEBI" id="CHEBI:142355"/>
        <dbReference type="EC" id="2.4.2.1"/>
    </reaction>
</comment>
<comment type="catalytic activity">
    <reaction evidence="1">
        <text>adenosine + phosphate = alpha-D-ribose 1-phosphate + adenine</text>
        <dbReference type="Rhea" id="RHEA:27642"/>
        <dbReference type="ChEBI" id="CHEBI:16335"/>
        <dbReference type="ChEBI" id="CHEBI:16708"/>
        <dbReference type="ChEBI" id="CHEBI:43474"/>
        <dbReference type="ChEBI" id="CHEBI:57720"/>
        <dbReference type="EC" id="2.4.2.1"/>
    </reaction>
</comment>
<comment type="catalytic activity">
    <reaction evidence="1">
        <text>cytidine + phosphate = cytosine + alpha-D-ribose 1-phosphate</text>
        <dbReference type="Rhea" id="RHEA:52540"/>
        <dbReference type="ChEBI" id="CHEBI:16040"/>
        <dbReference type="ChEBI" id="CHEBI:17562"/>
        <dbReference type="ChEBI" id="CHEBI:43474"/>
        <dbReference type="ChEBI" id="CHEBI:57720"/>
        <dbReference type="EC" id="2.4.2.2"/>
    </reaction>
</comment>
<comment type="catalytic activity">
    <reaction evidence="1">
        <text>guanosine + phosphate = alpha-D-ribose 1-phosphate + guanine</text>
        <dbReference type="Rhea" id="RHEA:13233"/>
        <dbReference type="ChEBI" id="CHEBI:16235"/>
        <dbReference type="ChEBI" id="CHEBI:16750"/>
        <dbReference type="ChEBI" id="CHEBI:43474"/>
        <dbReference type="ChEBI" id="CHEBI:57720"/>
        <dbReference type="EC" id="2.4.2.1"/>
    </reaction>
</comment>
<comment type="catalytic activity">
    <reaction evidence="1">
        <text>inosine + phosphate = alpha-D-ribose 1-phosphate + hypoxanthine</text>
        <dbReference type="Rhea" id="RHEA:27646"/>
        <dbReference type="ChEBI" id="CHEBI:17368"/>
        <dbReference type="ChEBI" id="CHEBI:17596"/>
        <dbReference type="ChEBI" id="CHEBI:43474"/>
        <dbReference type="ChEBI" id="CHEBI:57720"/>
        <dbReference type="EC" id="2.4.2.1"/>
    </reaction>
</comment>
<comment type="catalytic activity">
    <reaction evidence="1">
        <text>thymidine + phosphate = 2-deoxy-alpha-D-ribose 1-phosphate + thymine</text>
        <dbReference type="Rhea" id="RHEA:16037"/>
        <dbReference type="ChEBI" id="CHEBI:17748"/>
        <dbReference type="ChEBI" id="CHEBI:17821"/>
        <dbReference type="ChEBI" id="CHEBI:43474"/>
        <dbReference type="ChEBI" id="CHEBI:57259"/>
        <dbReference type="EC" id="2.4.2.2"/>
    </reaction>
</comment>
<comment type="catalytic activity">
    <reaction evidence="1">
        <text>uridine + phosphate = alpha-D-ribose 1-phosphate + uracil</text>
        <dbReference type="Rhea" id="RHEA:24388"/>
        <dbReference type="ChEBI" id="CHEBI:16704"/>
        <dbReference type="ChEBI" id="CHEBI:17568"/>
        <dbReference type="ChEBI" id="CHEBI:43474"/>
        <dbReference type="ChEBI" id="CHEBI:57720"/>
        <dbReference type="EC" id="2.4.2.2"/>
    </reaction>
</comment>
<comment type="catalytic activity">
    <reaction evidence="1">
        <text>xanthosine + phosphate = alpha-D-ribose 1-phosphate + xanthine</text>
        <dbReference type="Rhea" id="RHEA:27638"/>
        <dbReference type="ChEBI" id="CHEBI:17712"/>
        <dbReference type="ChEBI" id="CHEBI:18107"/>
        <dbReference type="ChEBI" id="CHEBI:43474"/>
        <dbReference type="ChEBI" id="CHEBI:57720"/>
        <dbReference type="EC" id="2.4.2.1"/>
    </reaction>
</comment>
<comment type="similarity">
    <text evidence="1">Belongs to the nucleoside phosphorylase PpnP family.</text>
</comment>
<accession>Q0T7J7</accession>
<gene>
    <name evidence="1" type="primary">ppnP</name>
    <name type="ordered locus">SFV_0356</name>
</gene>
<dbReference type="EC" id="2.4.2.1" evidence="1"/>
<dbReference type="EC" id="2.4.2.2" evidence="1"/>
<dbReference type="EMBL" id="CP000266">
    <property type="protein sequence ID" value="ABF02629.1"/>
    <property type="molecule type" value="Genomic_DNA"/>
</dbReference>
<dbReference type="RefSeq" id="WP_000941942.1">
    <property type="nucleotide sequence ID" value="NC_008258.1"/>
</dbReference>
<dbReference type="SMR" id="Q0T7J7"/>
<dbReference type="GeneID" id="93777070"/>
<dbReference type="KEGG" id="sfv:SFV_0356"/>
<dbReference type="HOGENOM" id="CLU_157874_0_0_6"/>
<dbReference type="Proteomes" id="UP000000659">
    <property type="component" value="Chromosome"/>
</dbReference>
<dbReference type="GO" id="GO:0005829">
    <property type="term" value="C:cytosol"/>
    <property type="evidence" value="ECO:0007669"/>
    <property type="project" value="TreeGrafter"/>
</dbReference>
<dbReference type="GO" id="GO:0047975">
    <property type="term" value="F:guanosine phosphorylase activity"/>
    <property type="evidence" value="ECO:0007669"/>
    <property type="project" value="UniProtKB-EC"/>
</dbReference>
<dbReference type="GO" id="GO:0004731">
    <property type="term" value="F:purine-nucleoside phosphorylase activity"/>
    <property type="evidence" value="ECO:0007669"/>
    <property type="project" value="UniProtKB-UniRule"/>
</dbReference>
<dbReference type="GO" id="GO:0009032">
    <property type="term" value="F:thymidine phosphorylase activity"/>
    <property type="evidence" value="ECO:0007669"/>
    <property type="project" value="UniProtKB-EC"/>
</dbReference>
<dbReference type="GO" id="GO:0004850">
    <property type="term" value="F:uridine phosphorylase activity"/>
    <property type="evidence" value="ECO:0007669"/>
    <property type="project" value="UniProtKB-EC"/>
</dbReference>
<dbReference type="CDD" id="cd20296">
    <property type="entry name" value="cupin_PpnP-like"/>
    <property type="match status" value="1"/>
</dbReference>
<dbReference type="FunFam" id="2.60.120.10:FF:000016">
    <property type="entry name" value="Pyrimidine/purine nucleoside phosphorylase"/>
    <property type="match status" value="1"/>
</dbReference>
<dbReference type="Gene3D" id="2.60.120.10">
    <property type="entry name" value="Jelly Rolls"/>
    <property type="match status" value="1"/>
</dbReference>
<dbReference type="HAMAP" id="MF_01537">
    <property type="entry name" value="Nucleos_phosphorylase_PpnP"/>
    <property type="match status" value="1"/>
</dbReference>
<dbReference type="InterPro" id="IPR009664">
    <property type="entry name" value="Ppnp"/>
</dbReference>
<dbReference type="InterPro" id="IPR014710">
    <property type="entry name" value="RmlC-like_jellyroll"/>
</dbReference>
<dbReference type="InterPro" id="IPR011051">
    <property type="entry name" value="RmlC_Cupin_sf"/>
</dbReference>
<dbReference type="NCBIfam" id="NF007875">
    <property type="entry name" value="PRK10579.1"/>
    <property type="match status" value="1"/>
</dbReference>
<dbReference type="PANTHER" id="PTHR36540">
    <property type="entry name" value="PYRIMIDINE/PURINE NUCLEOSIDE PHOSPHORYLASE"/>
    <property type="match status" value="1"/>
</dbReference>
<dbReference type="PANTHER" id="PTHR36540:SF1">
    <property type="entry name" value="PYRIMIDINE_PURINE NUCLEOSIDE PHOSPHORYLASE"/>
    <property type="match status" value="1"/>
</dbReference>
<dbReference type="Pfam" id="PF06865">
    <property type="entry name" value="Ppnp"/>
    <property type="match status" value="1"/>
</dbReference>
<dbReference type="SUPFAM" id="SSF51182">
    <property type="entry name" value="RmlC-like cupins"/>
    <property type="match status" value="1"/>
</dbReference>
<name>PPNP_SHIF8</name>
<keyword id="KW-0328">Glycosyltransferase</keyword>
<keyword id="KW-0808">Transferase</keyword>
<evidence type="ECO:0000255" key="1">
    <source>
        <dbReference type="HAMAP-Rule" id="MF_01537"/>
    </source>
</evidence>
<feature type="chain" id="PRO_0000298731" description="Pyrimidine/purine nucleoside phosphorylase">
    <location>
        <begin position="1"/>
        <end position="94"/>
    </location>
</feature>